<geneLocation type="plasmid">
    <name>ece1</name>
</geneLocation>
<gene>
    <name type="ordered locus">aq_aa18</name>
</gene>
<sequence length="221" mass="24407">MDSGKDTNGYERVWETNCGAMNSGLIMWVISGSGSFSDHYERDPTGGITFTVTNPGTSKRVITVGAFASRPLDTQSFYNAGRIAYFSSRGPTRNGRIKPNIVAGGYFICSTNSEFSSHSDPYICAEGHYYVPFAGTSMATAVVMGLVALYLQDHSFAIPEEVKEWFSSNAVEDDNFLYPNVVYCSEKAVYVLETRFKGSGKTSEQKLRRVTFSYRLAEMGL</sequence>
<keyword id="KW-0614">Plasmid</keyword>
<keyword id="KW-1185">Reference proteome</keyword>
<accession>O66409</accession>
<comment type="similarity">
    <text evidence="1">Belongs to the peptidase S8 family.</text>
</comment>
<dbReference type="EMBL" id="AE000667">
    <property type="protein sequence ID" value="AAC07961.1"/>
    <property type="molecule type" value="Genomic_DNA"/>
</dbReference>
<dbReference type="RefSeq" id="NP_046409.1">
    <property type="nucleotide sequence ID" value="NC_001880.1"/>
</dbReference>
<dbReference type="RefSeq" id="WP_010890555.1">
    <property type="nucleotide sequence ID" value="NC_001880.1"/>
</dbReference>
<dbReference type="SMR" id="O66409"/>
<dbReference type="MEROPS" id="S08.106"/>
<dbReference type="EnsemblBacteria" id="AAC07961">
    <property type="protein sequence ID" value="AAC07961"/>
    <property type="gene ID" value="aq_aa18"/>
</dbReference>
<dbReference type="KEGG" id="aae:aq_aa18"/>
<dbReference type="eggNOG" id="COG1404">
    <property type="taxonomic scope" value="Bacteria"/>
</dbReference>
<dbReference type="HOGENOM" id="CLU_1248502_0_0_0"/>
<dbReference type="InParanoid" id="O66409"/>
<dbReference type="OrthoDB" id="9762689at2"/>
<dbReference type="Proteomes" id="UP000000798">
    <property type="component" value="Plasmid ece1"/>
</dbReference>
<dbReference type="GO" id="GO:0004252">
    <property type="term" value="F:serine-type endopeptidase activity"/>
    <property type="evidence" value="ECO:0007669"/>
    <property type="project" value="InterPro"/>
</dbReference>
<dbReference type="GO" id="GO:0006508">
    <property type="term" value="P:proteolysis"/>
    <property type="evidence" value="ECO:0007669"/>
    <property type="project" value="InterPro"/>
</dbReference>
<dbReference type="Gene3D" id="3.40.50.200">
    <property type="entry name" value="Peptidase S8/S53 domain"/>
    <property type="match status" value="1"/>
</dbReference>
<dbReference type="InterPro" id="IPR000209">
    <property type="entry name" value="Peptidase_S8/S53_dom"/>
</dbReference>
<dbReference type="InterPro" id="IPR036852">
    <property type="entry name" value="Peptidase_S8/S53_dom_sf"/>
</dbReference>
<dbReference type="InterPro" id="IPR050131">
    <property type="entry name" value="Peptidase_S8_subtilisin-like"/>
</dbReference>
<dbReference type="PANTHER" id="PTHR43806">
    <property type="entry name" value="PEPTIDASE S8"/>
    <property type="match status" value="1"/>
</dbReference>
<dbReference type="PANTHER" id="PTHR43806:SF65">
    <property type="entry name" value="SERINE PROTEASE APRX"/>
    <property type="match status" value="1"/>
</dbReference>
<dbReference type="Pfam" id="PF00082">
    <property type="entry name" value="Peptidase_S8"/>
    <property type="match status" value="1"/>
</dbReference>
<dbReference type="SUPFAM" id="SSF52743">
    <property type="entry name" value="Subtilisin-like"/>
    <property type="match status" value="1"/>
</dbReference>
<dbReference type="PROSITE" id="PS51892">
    <property type="entry name" value="SUBTILASE"/>
    <property type="match status" value="1"/>
</dbReference>
<name>YZ18_AQUAE</name>
<organism>
    <name type="scientific">Aquifex aeolicus (strain VF5)</name>
    <dbReference type="NCBI Taxonomy" id="224324"/>
    <lineage>
        <taxon>Bacteria</taxon>
        <taxon>Pseudomonadati</taxon>
        <taxon>Aquificota</taxon>
        <taxon>Aquificia</taxon>
        <taxon>Aquificales</taxon>
        <taxon>Aquificaceae</taxon>
        <taxon>Aquifex</taxon>
    </lineage>
</organism>
<reference key="1">
    <citation type="journal article" date="1998" name="Nature">
        <title>The complete genome of the hyperthermophilic bacterium Aquifex aeolicus.</title>
        <authorList>
            <person name="Deckert G."/>
            <person name="Warren P.V."/>
            <person name="Gaasterland T."/>
            <person name="Young W.G."/>
            <person name="Lenox A.L."/>
            <person name="Graham D.E."/>
            <person name="Overbeek R."/>
            <person name="Snead M.A."/>
            <person name="Keller M."/>
            <person name="Aujay M."/>
            <person name="Huber R."/>
            <person name="Feldman R.A."/>
            <person name="Short J.M."/>
            <person name="Olsen G.J."/>
            <person name="Swanson R.V."/>
        </authorList>
    </citation>
    <scope>NUCLEOTIDE SEQUENCE [LARGE SCALE GENOMIC DNA]</scope>
    <source>
        <strain>VF5</strain>
    </source>
</reference>
<protein>
    <recommendedName>
        <fullName>Uncharacterized protein aq_aa18</fullName>
    </recommendedName>
</protein>
<proteinExistence type="inferred from homology"/>
<evidence type="ECO:0000255" key="1">
    <source>
        <dbReference type="PROSITE-ProRule" id="PRU01240"/>
    </source>
</evidence>
<feature type="chain" id="PRO_0000186989" description="Uncharacterized protein aq_aa18">
    <location>
        <begin position="1"/>
        <end position="221"/>
    </location>
</feature>
<feature type="domain" description="Peptidase S8" evidence="1">
    <location>
        <begin position="1"/>
        <end position="189"/>
    </location>
</feature>